<sequence>MNDTSRTTAVCEPGCSNGVTRRAQAPVGTSFKHEHLSSILADGLKDGFFEVHAENYMGAGGPPHRALAAIREAYPISLHGVCMSIGGPGALDLTHLSRFRDLVTRYEPVLVSEHLAWSSHGGTFFNDLLPLPYTKATLEHVCEHISQVQDAIKRPLLLENPSTYVAFASSTLSETEFIRAVVQHTGCGLLLDLNNVFVSATNHGFSAEAYLEGLPLEQVGEIHLAGHSEQRDDENELLLIDSHDCAISDPVWHLYRDLVARIGPTPTLIEWDSKLPAWPVLRAQALSARHITAEEDVSLAEEVSHAG</sequence>
<organism>
    <name type="scientific">Paraburkholderia phytofirmans (strain DSM 17436 / LMG 22146 / PsJN)</name>
    <name type="common">Burkholderia phytofirmans</name>
    <dbReference type="NCBI Taxonomy" id="398527"/>
    <lineage>
        <taxon>Bacteria</taxon>
        <taxon>Pseudomonadati</taxon>
        <taxon>Pseudomonadota</taxon>
        <taxon>Betaproteobacteria</taxon>
        <taxon>Burkholderiales</taxon>
        <taxon>Burkholderiaceae</taxon>
        <taxon>Paraburkholderia</taxon>
    </lineage>
</organism>
<reference key="1">
    <citation type="journal article" date="2011" name="J. Bacteriol.">
        <title>Complete genome sequence of the plant growth-promoting endophyte Burkholderia phytofirmans strain PsJN.</title>
        <authorList>
            <person name="Weilharter A."/>
            <person name="Mitter B."/>
            <person name="Shin M.V."/>
            <person name="Chain P.S."/>
            <person name="Nowak J."/>
            <person name="Sessitsch A."/>
        </authorList>
    </citation>
    <scope>NUCLEOTIDE SEQUENCE [LARGE SCALE GENOMIC DNA]</scope>
    <source>
        <strain>DSM 17436 / LMG 22146 / PsJN</strain>
    </source>
</reference>
<dbReference type="EMBL" id="CP001053">
    <property type="protein sequence ID" value="ACD19489.1"/>
    <property type="molecule type" value="Genomic_DNA"/>
</dbReference>
<dbReference type="RefSeq" id="WP_012427000.1">
    <property type="nucleotide sequence ID" value="NC_010676.1"/>
</dbReference>
<dbReference type="SMR" id="B2TCR1"/>
<dbReference type="STRING" id="398527.Bphyt_5128"/>
<dbReference type="KEGG" id="bpy:Bphyt_5128"/>
<dbReference type="eggNOG" id="COG3220">
    <property type="taxonomic scope" value="Bacteria"/>
</dbReference>
<dbReference type="HOGENOM" id="CLU_064263_0_0_4"/>
<dbReference type="Proteomes" id="UP000001739">
    <property type="component" value="Chromosome 2"/>
</dbReference>
<dbReference type="Gene3D" id="3.20.20.150">
    <property type="entry name" value="Divalent-metal-dependent TIM barrel enzymes"/>
    <property type="match status" value="1"/>
</dbReference>
<dbReference type="HAMAP" id="MF_00697">
    <property type="entry name" value="UPF0276"/>
    <property type="match status" value="1"/>
</dbReference>
<dbReference type="InterPro" id="IPR007801">
    <property type="entry name" value="MbnB/TglH/ChrH"/>
</dbReference>
<dbReference type="InterPro" id="IPR036237">
    <property type="entry name" value="Xyl_isomerase-like_sf"/>
</dbReference>
<dbReference type="NCBIfam" id="NF003818">
    <property type="entry name" value="PRK05409.1"/>
    <property type="match status" value="1"/>
</dbReference>
<dbReference type="PANTHER" id="PTHR42194">
    <property type="entry name" value="UPF0276 PROTEIN HI_1600"/>
    <property type="match status" value="1"/>
</dbReference>
<dbReference type="PANTHER" id="PTHR42194:SF1">
    <property type="entry name" value="UPF0276 PROTEIN HI_1600"/>
    <property type="match status" value="1"/>
</dbReference>
<dbReference type="Pfam" id="PF05114">
    <property type="entry name" value="MbnB_TglH_ChrH"/>
    <property type="match status" value="1"/>
</dbReference>
<dbReference type="SUPFAM" id="SSF51658">
    <property type="entry name" value="Xylose isomerase-like"/>
    <property type="match status" value="1"/>
</dbReference>
<name>Y5128_PARPJ</name>
<feature type="chain" id="PRO_1000132336" description="UPF0276 protein Bphyt_5128">
    <location>
        <begin position="1"/>
        <end position="307"/>
    </location>
</feature>
<accession>B2TCR1</accession>
<proteinExistence type="inferred from homology"/>
<comment type="similarity">
    <text evidence="1">Belongs to the UPF0276 family.</text>
</comment>
<evidence type="ECO:0000255" key="1">
    <source>
        <dbReference type="HAMAP-Rule" id="MF_00697"/>
    </source>
</evidence>
<protein>
    <recommendedName>
        <fullName evidence="1">UPF0276 protein Bphyt_5128</fullName>
    </recommendedName>
</protein>
<gene>
    <name type="ordered locus">Bphyt_5128</name>
</gene>